<evidence type="ECO:0000250" key="1">
    <source>
        <dbReference type="UniProtKB" id="Q8BJM3"/>
    </source>
</evidence>
<evidence type="ECO:0000255" key="2"/>
<evidence type="ECO:0000256" key="3">
    <source>
        <dbReference type="SAM" id="MobiDB-lite"/>
    </source>
</evidence>
<evidence type="ECO:0000269" key="4">
    <source>
    </source>
</evidence>
<evidence type="ECO:0000269" key="5">
    <source>
    </source>
</evidence>
<evidence type="ECO:0000269" key="6">
    <source>
    </source>
</evidence>
<evidence type="ECO:0000269" key="7">
    <source ref="1"/>
</evidence>
<evidence type="ECO:0000303" key="8">
    <source>
    </source>
</evidence>
<evidence type="ECO:0000303" key="9">
    <source>
    </source>
</evidence>
<evidence type="ECO:0000305" key="10"/>
<evidence type="ECO:0007744" key="11">
    <source>
    </source>
</evidence>
<gene>
    <name type="primary">R3HCC1L</name>
    <name type="synonym">C10orf28</name>
    <name type="synonym">GIDRP88</name>
</gene>
<comment type="subunit">
    <text>May interact with the exon junction complex (EJC) composed at least of CASC3, EIF4A3, MAGOH and RBM8A.</text>
</comment>
<comment type="interaction">
    <interactant intactId="EBI-10262006">
        <id>Q7Z5L2</id>
    </interactant>
    <interactant intactId="EBI-10261970">
        <id>Q8IW40</id>
        <label>CCDC103</label>
    </interactant>
    <organismsDiffer>false</organismsDiffer>
    <experiments>3</experiments>
</comment>
<comment type="alternative products">
    <event type="alternative splicing"/>
    <isoform>
        <id>Q7Z5L2-1</id>
        <name>1</name>
        <sequence type="displayed"/>
    </isoform>
    <isoform>
        <id>Q7Z5L2-2</id>
        <name>2</name>
        <sequence type="described" ref="VSP_014920"/>
    </isoform>
    <isoform>
        <id>Q7Z5L2-3</id>
        <name>3</name>
        <sequence type="described" ref="VSP_014919 VSP_014921"/>
    </isoform>
</comment>
<comment type="tissue specificity">
    <text>Expressed in placenta.</text>
</comment>
<comment type="sequence caution" evidence="10">
    <conflict type="frameshift">
        <sequence resource="EMBL-CDS" id="AAC05748"/>
    </conflict>
</comment>
<comment type="sequence caution" evidence="10">
    <conflict type="erroneous initiation">
        <sequence resource="EMBL-CDS" id="BAC04364"/>
    </conflict>
    <text>Truncated N-terminus.</text>
</comment>
<organism>
    <name type="scientific">Homo sapiens</name>
    <name type="common">Human</name>
    <dbReference type="NCBI Taxonomy" id="9606"/>
    <lineage>
        <taxon>Eukaryota</taxon>
        <taxon>Metazoa</taxon>
        <taxon>Chordata</taxon>
        <taxon>Craniata</taxon>
        <taxon>Vertebrata</taxon>
        <taxon>Euteleostomi</taxon>
        <taxon>Mammalia</taxon>
        <taxon>Eutheria</taxon>
        <taxon>Euarchontoglires</taxon>
        <taxon>Primates</taxon>
        <taxon>Haplorrhini</taxon>
        <taxon>Catarrhini</taxon>
        <taxon>Hominidae</taxon>
        <taxon>Homo</taxon>
    </lineage>
</organism>
<sequence length="792" mass="87883">MQQESERCRVRARRPDMALYVPKARRGAVLLKTGDEEESCGSPNSVVKEKQKESSLSQKEVFKDKPEARRLNINPDRKEHNCREEKKSSTKLRMDTCLQKTNRVCSKRGTTESKEVLSQGQQQGAPNAGVITNAPLQRHFKPKKVECLEVETTDVTGHERILLSQACLEISEAQVPSKPFQNVEFCDFSRHEPDGEAFEDKDLEGRIETDTKVLEILYEFPRVFSSVMKPENMIVPIKLSSDSEIVQQSMQTSDGILNPSSGGITTTSVPGSPDGVFDQTCVDFEVESVGGIANSTGFILDQKDTDSIPATMGHISLSESTNDTVSPVMIRECEKNDSTADELHVKHEPPDTAVLAHETHRDSGFKNVGDITNKACMMDTTGMSCSDHVTVDSPYVVAVRIADETSINTRSFSKFVGMSADATPLHVARSGNDTEDFSNPSACSDIYGESISSHFTESTGKLIESLSDCASSLPIKKIAGSNYNTFLDSELSMLNGTKVLSDSAVGIDLGSTGDTTEALHELRTAEEFKTEEQDDSGSIEFGVSFPDRESSSMETSIEPKATETSHTEGITAIEESWESMFNDDGDCLDPRLLQEGILMHIKPENHCSKLSGNTKSRESIQEPRSDYYNHEVPDIDLSDCEFPHVIEIYDFPQEFHTEDLLRVFCSYQKKGFDIKWVDDTHALGVFSSPITARDALGIKHTMVKIRPLSQATRAAKAKARAYAEFLQPAKERPETSAALARRLVISALGVRSKQSKTEREAELKKLQEARERKRLEAKQREDIWEGRDQSTV</sequence>
<reference key="1">
    <citation type="submission" date="2002-06" db="EMBL/GenBank/DDBJ databases">
        <title>Molecular cloning and characterization of a novel gene GIDRP88, encoding a growth inhibition and differentiation related protein.</title>
        <authorList>
            <person name="Yan J."/>
            <person name="Zhang J."/>
            <person name="Peng X."/>
            <person name="Luo D."/>
            <person name="Deng Y."/>
            <person name="Bao L."/>
            <person name="Liu Z."/>
            <person name="Li B."/>
            <person name="Gao X."/>
        </authorList>
    </citation>
    <scope>NUCLEOTIDE SEQUENCE [MRNA] (ISOFORM 1)</scope>
    <scope>VARIANT ARG-656</scope>
</reference>
<reference key="2">
    <citation type="journal article" date="2004" name="Nature">
        <title>The DNA sequence and comparative analysis of human chromosome 10.</title>
        <authorList>
            <person name="Deloukas P."/>
            <person name="Earthrowl M.E."/>
            <person name="Grafham D.V."/>
            <person name="Rubenfield M."/>
            <person name="French L."/>
            <person name="Steward C.A."/>
            <person name="Sims S.K."/>
            <person name="Jones M.C."/>
            <person name="Searle S."/>
            <person name="Scott C."/>
            <person name="Howe K."/>
            <person name="Hunt S.E."/>
            <person name="Andrews T.D."/>
            <person name="Gilbert J.G.R."/>
            <person name="Swarbreck D."/>
            <person name="Ashurst J.L."/>
            <person name="Taylor A."/>
            <person name="Battles J."/>
            <person name="Bird C.P."/>
            <person name="Ainscough R."/>
            <person name="Almeida J.P."/>
            <person name="Ashwell R.I.S."/>
            <person name="Ambrose K.D."/>
            <person name="Babbage A.K."/>
            <person name="Bagguley C.L."/>
            <person name="Bailey J."/>
            <person name="Banerjee R."/>
            <person name="Bates K."/>
            <person name="Beasley H."/>
            <person name="Bray-Allen S."/>
            <person name="Brown A.J."/>
            <person name="Brown J.Y."/>
            <person name="Burford D.C."/>
            <person name="Burrill W."/>
            <person name="Burton J."/>
            <person name="Cahill P."/>
            <person name="Camire D."/>
            <person name="Carter N.P."/>
            <person name="Chapman J.C."/>
            <person name="Clark S.Y."/>
            <person name="Clarke G."/>
            <person name="Clee C.M."/>
            <person name="Clegg S."/>
            <person name="Corby N."/>
            <person name="Coulson A."/>
            <person name="Dhami P."/>
            <person name="Dutta I."/>
            <person name="Dunn M."/>
            <person name="Faulkner L."/>
            <person name="Frankish A."/>
            <person name="Frankland J.A."/>
            <person name="Garner P."/>
            <person name="Garnett J."/>
            <person name="Gribble S."/>
            <person name="Griffiths C."/>
            <person name="Grocock R."/>
            <person name="Gustafson E."/>
            <person name="Hammond S."/>
            <person name="Harley J.L."/>
            <person name="Hart E."/>
            <person name="Heath P.D."/>
            <person name="Ho T.P."/>
            <person name="Hopkins B."/>
            <person name="Horne J."/>
            <person name="Howden P.J."/>
            <person name="Huckle E."/>
            <person name="Hynds C."/>
            <person name="Johnson C."/>
            <person name="Johnson D."/>
            <person name="Kana A."/>
            <person name="Kay M."/>
            <person name="Kimberley A.M."/>
            <person name="Kershaw J.K."/>
            <person name="Kokkinaki M."/>
            <person name="Laird G.K."/>
            <person name="Lawlor S."/>
            <person name="Lee H.M."/>
            <person name="Leongamornlert D.A."/>
            <person name="Laird G."/>
            <person name="Lloyd C."/>
            <person name="Lloyd D.M."/>
            <person name="Loveland J."/>
            <person name="Lovell J."/>
            <person name="McLaren S."/>
            <person name="McLay K.E."/>
            <person name="McMurray A."/>
            <person name="Mashreghi-Mohammadi M."/>
            <person name="Matthews L."/>
            <person name="Milne S."/>
            <person name="Nickerson T."/>
            <person name="Nguyen M."/>
            <person name="Overton-Larty E."/>
            <person name="Palmer S.A."/>
            <person name="Pearce A.V."/>
            <person name="Peck A.I."/>
            <person name="Pelan S."/>
            <person name="Phillimore B."/>
            <person name="Porter K."/>
            <person name="Rice C.M."/>
            <person name="Rogosin A."/>
            <person name="Ross M.T."/>
            <person name="Sarafidou T."/>
            <person name="Sehra H.K."/>
            <person name="Shownkeen R."/>
            <person name="Skuce C.D."/>
            <person name="Smith M."/>
            <person name="Standring L."/>
            <person name="Sycamore N."/>
            <person name="Tester J."/>
            <person name="Thorpe A."/>
            <person name="Torcasso W."/>
            <person name="Tracey A."/>
            <person name="Tromans A."/>
            <person name="Tsolas J."/>
            <person name="Wall M."/>
            <person name="Walsh J."/>
            <person name="Wang H."/>
            <person name="Weinstock K."/>
            <person name="West A.P."/>
            <person name="Willey D.L."/>
            <person name="Whitehead S.L."/>
            <person name="Wilming L."/>
            <person name="Wray P.W."/>
            <person name="Young L."/>
            <person name="Chen Y."/>
            <person name="Lovering R.C."/>
            <person name="Moschonas N.K."/>
            <person name="Siebert R."/>
            <person name="Fechtel K."/>
            <person name="Bentley D."/>
            <person name="Durbin R.M."/>
            <person name="Hubbard T."/>
            <person name="Doucette-Stamm L."/>
            <person name="Beck S."/>
            <person name="Smith D.R."/>
            <person name="Rogers J."/>
        </authorList>
    </citation>
    <scope>NUCLEOTIDE SEQUENCE [LARGE SCALE GENOMIC DNA]</scope>
</reference>
<reference key="3">
    <citation type="journal article" date="2004" name="Genome Res.">
        <title>The status, quality, and expansion of the NIH full-length cDNA project: the Mammalian Gene Collection (MGC).</title>
        <authorList>
            <consortium name="The MGC Project Team"/>
        </authorList>
    </citation>
    <scope>NUCLEOTIDE SEQUENCE [MRNA] (ISOFORM 3)</scope>
    <scope>VARIANT ARG-656</scope>
    <source>
        <tissue>Ovary</tissue>
    </source>
</reference>
<reference key="4">
    <citation type="journal article" date="2000" name="Fetal Diagn. Ther.">
        <title>The development of a genetic profile of placental gene expression during the first trimester of pregnancy: a potential tool for identifying novel secreted markers.</title>
        <authorList>
            <person name="Page N.M."/>
            <person name="Butlin D.J."/>
            <person name="Manyonda I."/>
            <person name="Lowry P.J."/>
        </authorList>
    </citation>
    <scope>NUCLEOTIDE SEQUENCE [MRNA] OF 1-362 (ISOFORM 1)</scope>
    <source>
        <tissue>Placenta</tissue>
    </source>
</reference>
<reference key="5">
    <citation type="journal article" date="2004" name="Nat. Genet.">
        <title>Complete sequencing and characterization of 21,243 full-length human cDNAs.</title>
        <authorList>
            <person name="Ota T."/>
            <person name="Suzuki Y."/>
            <person name="Nishikawa T."/>
            <person name="Otsuki T."/>
            <person name="Sugiyama T."/>
            <person name="Irie R."/>
            <person name="Wakamatsu A."/>
            <person name="Hayashi K."/>
            <person name="Sato H."/>
            <person name="Nagai K."/>
            <person name="Kimura K."/>
            <person name="Makita H."/>
            <person name="Sekine M."/>
            <person name="Obayashi M."/>
            <person name="Nishi T."/>
            <person name="Shibahara T."/>
            <person name="Tanaka T."/>
            <person name="Ishii S."/>
            <person name="Yamamoto J."/>
            <person name="Saito K."/>
            <person name="Kawai Y."/>
            <person name="Isono Y."/>
            <person name="Nakamura Y."/>
            <person name="Nagahari K."/>
            <person name="Murakami K."/>
            <person name="Yasuda T."/>
            <person name="Iwayanagi T."/>
            <person name="Wagatsuma M."/>
            <person name="Shiratori A."/>
            <person name="Sudo H."/>
            <person name="Hosoiri T."/>
            <person name="Kaku Y."/>
            <person name="Kodaira H."/>
            <person name="Kondo H."/>
            <person name="Sugawara M."/>
            <person name="Takahashi M."/>
            <person name="Kanda K."/>
            <person name="Yokoi T."/>
            <person name="Furuya T."/>
            <person name="Kikkawa E."/>
            <person name="Omura Y."/>
            <person name="Abe K."/>
            <person name="Kamihara K."/>
            <person name="Katsuta N."/>
            <person name="Sato K."/>
            <person name="Tanikawa M."/>
            <person name="Yamazaki M."/>
            <person name="Ninomiya K."/>
            <person name="Ishibashi T."/>
            <person name="Yamashita H."/>
            <person name="Murakawa K."/>
            <person name="Fujimori K."/>
            <person name="Tanai H."/>
            <person name="Kimata M."/>
            <person name="Watanabe M."/>
            <person name="Hiraoka S."/>
            <person name="Chiba Y."/>
            <person name="Ishida S."/>
            <person name="Ono Y."/>
            <person name="Takiguchi S."/>
            <person name="Watanabe S."/>
            <person name="Yosida M."/>
            <person name="Hotuta T."/>
            <person name="Kusano J."/>
            <person name="Kanehori K."/>
            <person name="Takahashi-Fujii A."/>
            <person name="Hara H."/>
            <person name="Tanase T.-O."/>
            <person name="Nomura Y."/>
            <person name="Togiya S."/>
            <person name="Komai F."/>
            <person name="Hara R."/>
            <person name="Takeuchi K."/>
            <person name="Arita M."/>
            <person name="Imose N."/>
            <person name="Musashino K."/>
            <person name="Yuuki H."/>
            <person name="Oshima A."/>
            <person name="Sasaki N."/>
            <person name="Aotsuka S."/>
            <person name="Yoshikawa Y."/>
            <person name="Matsunawa H."/>
            <person name="Ichihara T."/>
            <person name="Shiohata N."/>
            <person name="Sano S."/>
            <person name="Moriya S."/>
            <person name="Momiyama H."/>
            <person name="Satoh N."/>
            <person name="Takami S."/>
            <person name="Terashima Y."/>
            <person name="Suzuki O."/>
            <person name="Nakagawa S."/>
            <person name="Senoh A."/>
            <person name="Mizoguchi H."/>
            <person name="Goto Y."/>
            <person name="Shimizu F."/>
            <person name="Wakebe H."/>
            <person name="Hishigaki H."/>
            <person name="Watanabe T."/>
            <person name="Sugiyama A."/>
            <person name="Takemoto M."/>
            <person name="Kawakami B."/>
            <person name="Yamazaki M."/>
            <person name="Watanabe K."/>
            <person name="Kumagai A."/>
            <person name="Itakura S."/>
            <person name="Fukuzumi Y."/>
            <person name="Fujimori Y."/>
            <person name="Komiyama M."/>
            <person name="Tashiro H."/>
            <person name="Tanigami A."/>
            <person name="Fujiwara T."/>
            <person name="Ono T."/>
            <person name="Yamada K."/>
            <person name="Fujii Y."/>
            <person name="Ozaki K."/>
            <person name="Hirao M."/>
            <person name="Ohmori Y."/>
            <person name="Kawabata A."/>
            <person name="Hikiji T."/>
            <person name="Kobatake N."/>
            <person name="Inagaki H."/>
            <person name="Ikema Y."/>
            <person name="Okamoto S."/>
            <person name="Okitani R."/>
            <person name="Kawakami T."/>
            <person name="Noguchi S."/>
            <person name="Itoh T."/>
            <person name="Shigeta K."/>
            <person name="Senba T."/>
            <person name="Matsumura K."/>
            <person name="Nakajima Y."/>
            <person name="Mizuno T."/>
            <person name="Morinaga M."/>
            <person name="Sasaki M."/>
            <person name="Togashi T."/>
            <person name="Oyama M."/>
            <person name="Hata H."/>
            <person name="Watanabe M."/>
            <person name="Komatsu T."/>
            <person name="Mizushima-Sugano J."/>
            <person name="Satoh T."/>
            <person name="Shirai Y."/>
            <person name="Takahashi Y."/>
            <person name="Nakagawa K."/>
            <person name="Okumura K."/>
            <person name="Nagase T."/>
            <person name="Nomura N."/>
            <person name="Kikuchi H."/>
            <person name="Masuho Y."/>
            <person name="Yamashita R."/>
            <person name="Nakai K."/>
            <person name="Yada T."/>
            <person name="Nakamura Y."/>
            <person name="Ohara O."/>
            <person name="Isogai T."/>
            <person name="Sugano S."/>
        </authorList>
    </citation>
    <scope>NUCLEOTIDE SEQUENCE [LARGE SCALE MRNA] OF 391-792 (ISOFORM 2)</scope>
    <scope>VARIANTS ARG-566 AND ARG-656</scope>
    <source>
        <tissue>Cerebellum</tissue>
    </source>
</reference>
<reference key="6">
    <citation type="journal article" date="2010" name="Genes Dev.">
        <title>SMG6 interacts with the exon junction complex via two conserved EJC-binding motifs (EBMs) required for nonsense-mediated mRNA decay.</title>
        <authorList>
            <person name="Kashima I."/>
            <person name="Jonas S."/>
            <person name="Jayachandran U."/>
            <person name="Buchwald G."/>
            <person name="Conti E."/>
            <person name="Lupas A.N."/>
            <person name="Izaurralde E."/>
        </authorList>
    </citation>
    <scope>INTERACTION WITH THE EJC COMPLEX</scope>
    <scope>MUTAGENESIS OF 14-ARG--TYR-20</scope>
</reference>
<reference key="7">
    <citation type="journal article" date="2013" name="J. Proteome Res.">
        <title>Toward a comprehensive characterization of a human cancer cell phosphoproteome.</title>
        <authorList>
            <person name="Zhou H."/>
            <person name="Di Palma S."/>
            <person name="Preisinger C."/>
            <person name="Peng M."/>
            <person name="Polat A.N."/>
            <person name="Heck A.J."/>
            <person name="Mohammed S."/>
        </authorList>
    </citation>
    <scope>PHOSPHORYLATION [LARGE SCALE ANALYSIS] AT SER-688</scope>
    <scope>IDENTIFICATION BY MASS SPECTROMETRY [LARGE SCALE ANALYSIS]</scope>
    <source>
        <tissue>Erythroleukemia</tissue>
    </source>
</reference>
<protein>
    <recommendedName>
        <fullName>Coiled-coil domain-containing protein R3HCC1L</fullName>
    </recommendedName>
    <alternativeName>
        <fullName>Growth inhibition and differentiation-related protein 88</fullName>
    </alternativeName>
    <alternativeName>
        <fullName>Putative mitochondrial space protein 32.1</fullName>
    </alternativeName>
    <alternativeName>
        <fullName>R3H and coiled-coil domain-containing protein 1-like</fullName>
    </alternativeName>
</protein>
<feature type="chain" id="PRO_0000087487" description="Coiled-coil domain-containing protein R3HCC1L">
    <location>
        <begin position="1"/>
        <end position="792"/>
    </location>
</feature>
<feature type="region of interest" description="EJC-binding motif; may mediate interaction with the EJC">
    <location>
        <begin position="7"/>
        <end position="27"/>
    </location>
</feature>
<feature type="region of interest" description="Disordered" evidence="3">
    <location>
        <begin position="32"/>
        <end position="61"/>
    </location>
</feature>
<feature type="region of interest" description="Disordered" evidence="3">
    <location>
        <begin position="527"/>
        <end position="567"/>
    </location>
</feature>
<feature type="region of interest" description="Disordered" evidence="3">
    <location>
        <begin position="772"/>
        <end position="792"/>
    </location>
</feature>
<feature type="coiled-coil region" evidence="2">
    <location>
        <begin position="751"/>
        <end position="783"/>
    </location>
</feature>
<feature type="modified residue" description="Phosphoserine" evidence="11">
    <location>
        <position position="688"/>
    </location>
</feature>
<feature type="modified residue" description="Phosphothreonine" evidence="1">
    <location>
        <position position="712"/>
    </location>
</feature>
<feature type="splice variant" id="VSP_014919" description="In isoform 3." evidence="9">
    <location>
        <begin position="1"/>
        <end position="608"/>
    </location>
</feature>
<feature type="splice variant" id="VSP_014920" description="In isoform 2." evidence="8">
    <location>
        <begin position="595"/>
        <end position="608"/>
    </location>
</feature>
<feature type="splice variant" id="VSP_014921" description="In isoform 3." evidence="9">
    <original>K</original>
    <variation>M</variation>
    <location>
        <position position="609"/>
    </location>
</feature>
<feature type="sequence variant" id="VAR_056898" description="In dbSNP:rs12775148.">
    <original>S</original>
    <variation>P</variation>
    <location>
        <position position="113"/>
    </location>
</feature>
<feature type="sequence variant" id="VAR_056899" description="In dbSNP:rs7922159.">
    <original>K</original>
    <variation>N</variation>
    <location>
        <position position="238"/>
    </location>
</feature>
<feature type="sequence variant" id="VAR_056900" description="In dbSNP:rs35373035.">
    <original>S</original>
    <variation>G</variation>
    <location>
        <position position="261"/>
    </location>
</feature>
<feature type="sequence variant" id="VAR_056901" description="In dbSNP:rs34494334.">
    <original>D</original>
    <variation>A</variation>
    <location>
        <position position="535"/>
    </location>
</feature>
<feature type="sequence variant" id="VAR_061652" description="In dbSNP:rs35122894.">
    <original>P</original>
    <variation>S</variation>
    <location>
        <position position="546"/>
    </location>
</feature>
<feature type="sequence variant" id="VAR_023092" description="In dbSNP:rs11189513." evidence="4">
    <original>H</original>
    <variation>R</variation>
    <location>
        <position position="566"/>
    </location>
</feature>
<feature type="sequence variant" id="VAR_023093" description="In dbSNP:rs1952061." evidence="4 5 7">
    <original>H</original>
    <variation>R</variation>
    <location>
        <position position="656"/>
    </location>
</feature>
<feature type="mutagenesis site" description="Loss of interaction with the EJC." evidence="6">
    <original>RPDMALY</original>
    <variation>EPDMALE</variation>
    <location>
        <begin position="14"/>
        <end position="20"/>
    </location>
</feature>
<feature type="sequence conflict" description="In Ref. 1; AAP80788." evidence="10" ref="1">
    <original>K</original>
    <variation>E</variation>
    <location>
        <position position="212"/>
    </location>
</feature>
<feature type="sequence conflict" description="In Ref. 1; AAP80788." evidence="10" ref="1">
    <original>S</original>
    <variation>G</variation>
    <location>
        <position position="438"/>
    </location>
</feature>
<name>R3HCL_HUMAN</name>
<dbReference type="EMBL" id="AF525304">
    <property type="protein sequence ID" value="AAP80788.1"/>
    <property type="molecule type" value="mRNA"/>
</dbReference>
<dbReference type="EMBL" id="AL139241">
    <property type="status" value="NOT_ANNOTATED_CDS"/>
    <property type="molecule type" value="Genomic_DNA"/>
</dbReference>
<dbReference type="EMBL" id="AL355301">
    <property type="status" value="NOT_ANNOTATED_CDS"/>
    <property type="molecule type" value="Genomic_DNA"/>
</dbReference>
<dbReference type="EMBL" id="BC047908">
    <property type="protein sequence ID" value="AAH47908.1"/>
    <property type="molecule type" value="mRNA"/>
</dbReference>
<dbReference type="EMBL" id="AF050198">
    <property type="protein sequence ID" value="AAC05748.1"/>
    <property type="status" value="ALT_FRAME"/>
    <property type="molecule type" value="mRNA"/>
</dbReference>
<dbReference type="EMBL" id="AK094479">
    <property type="protein sequence ID" value="BAC04364.1"/>
    <property type="status" value="ALT_INIT"/>
    <property type="molecule type" value="mRNA"/>
</dbReference>
<dbReference type="CCDS" id="CCDS31267.1">
    <molecule id="Q7Z5L2-2"/>
</dbReference>
<dbReference type="CCDS" id="CCDS58093.1">
    <molecule id="Q7Z5L2-3"/>
</dbReference>
<dbReference type="CCDS" id="CCDS73178.1">
    <molecule id="Q7Z5L2-1"/>
</dbReference>
<dbReference type="RefSeq" id="NP_001243548.2">
    <molecule id="Q7Z5L2-1"/>
    <property type="nucleotide sequence ID" value="NM_001256619.2"/>
</dbReference>
<dbReference type="RefSeq" id="NP_001243549.1">
    <property type="nucleotide sequence ID" value="NM_001256620.1"/>
</dbReference>
<dbReference type="RefSeq" id="NP_001243550.2">
    <molecule id="Q7Z5L2-3"/>
    <property type="nucleotide sequence ID" value="NM_001256621.2"/>
</dbReference>
<dbReference type="RefSeq" id="XP_011537942.1">
    <molecule id="Q7Z5L2-1"/>
    <property type="nucleotide sequence ID" value="XM_011539640.2"/>
</dbReference>
<dbReference type="RefSeq" id="XP_011537943.1">
    <molecule id="Q7Z5L2-1"/>
    <property type="nucleotide sequence ID" value="XM_011539641.2"/>
</dbReference>
<dbReference type="RefSeq" id="XP_011537944.1">
    <molecule id="Q7Z5L2-1"/>
    <property type="nucleotide sequence ID" value="XM_011539642.2"/>
</dbReference>
<dbReference type="RefSeq" id="XP_011537945.1">
    <molecule id="Q7Z5L2-1"/>
    <property type="nucleotide sequence ID" value="XM_011539643.2"/>
</dbReference>
<dbReference type="RefSeq" id="XP_011537946.1">
    <molecule id="Q7Z5L2-1"/>
    <property type="nucleotide sequence ID" value="XM_011539644.3"/>
</dbReference>
<dbReference type="RefSeq" id="XP_011537947.1">
    <molecule id="Q7Z5L2-1"/>
    <property type="nucleotide sequence ID" value="XM_011539645.3"/>
</dbReference>
<dbReference type="RefSeq" id="XP_011537948.1">
    <molecule id="Q7Z5L2-1"/>
    <property type="nucleotide sequence ID" value="XM_011539646.2"/>
</dbReference>
<dbReference type="RefSeq" id="XP_011537949.1">
    <property type="nucleotide sequence ID" value="XM_011539647.1"/>
</dbReference>
<dbReference type="RefSeq" id="XP_011537950.1">
    <molecule id="Q7Z5L2-1"/>
    <property type="nucleotide sequence ID" value="XM_011539648.2"/>
</dbReference>
<dbReference type="RefSeq" id="XP_016871563.1">
    <property type="nucleotide sequence ID" value="XM_017016074.1"/>
</dbReference>
<dbReference type="RefSeq" id="XP_024303709.1">
    <molecule id="Q7Z5L2-1"/>
    <property type="nucleotide sequence ID" value="XM_024447941.2"/>
</dbReference>
<dbReference type="RefSeq" id="XP_047281017.1">
    <molecule id="Q7Z5L2-1"/>
    <property type="nucleotide sequence ID" value="XM_047425061.1"/>
</dbReference>
<dbReference type="RefSeq" id="XP_047281018.1">
    <molecule id="Q7Z5L2-1"/>
    <property type="nucleotide sequence ID" value="XM_047425062.1"/>
</dbReference>
<dbReference type="RefSeq" id="XP_047281019.1">
    <molecule id="Q7Z5L2-1"/>
    <property type="nucleotide sequence ID" value="XM_047425063.1"/>
</dbReference>
<dbReference type="RefSeq" id="XP_047281020.1">
    <molecule id="Q7Z5L2-1"/>
    <property type="nucleotide sequence ID" value="XM_047425064.1"/>
</dbReference>
<dbReference type="RefSeq" id="XP_047281021.1">
    <molecule id="Q7Z5L2-1"/>
    <property type="nucleotide sequence ID" value="XM_047425065.1"/>
</dbReference>
<dbReference type="RefSeq" id="XP_047281022.1">
    <molecule id="Q7Z5L2-1"/>
    <property type="nucleotide sequence ID" value="XM_047425066.1"/>
</dbReference>
<dbReference type="RefSeq" id="XP_047281023.1">
    <molecule id="Q7Z5L2-1"/>
    <property type="nucleotide sequence ID" value="XM_047425067.1"/>
</dbReference>
<dbReference type="SMR" id="Q7Z5L2"/>
<dbReference type="BioGRID" id="118115">
    <property type="interactions" value="23"/>
</dbReference>
<dbReference type="FunCoup" id="Q7Z5L2">
    <property type="interactions" value="1700"/>
</dbReference>
<dbReference type="IntAct" id="Q7Z5L2">
    <property type="interactions" value="11"/>
</dbReference>
<dbReference type="STRING" id="9606.ENSP00000483494"/>
<dbReference type="CarbonylDB" id="Q7Z5L2"/>
<dbReference type="GlyGen" id="Q7Z5L2">
    <property type="glycosylation" value="1 site, 1 O-linked glycan (1 site)"/>
</dbReference>
<dbReference type="iPTMnet" id="Q7Z5L2"/>
<dbReference type="PhosphoSitePlus" id="Q7Z5L2"/>
<dbReference type="BioMuta" id="R3HCC1L"/>
<dbReference type="DMDM" id="71648680"/>
<dbReference type="jPOST" id="Q7Z5L2"/>
<dbReference type="MassIVE" id="Q7Z5L2"/>
<dbReference type="PaxDb" id="9606-ENSP00000483494"/>
<dbReference type="PeptideAtlas" id="Q7Z5L2"/>
<dbReference type="ProteomicsDB" id="69316">
    <molecule id="Q7Z5L2-1"/>
</dbReference>
<dbReference type="ProteomicsDB" id="69317">
    <molecule id="Q7Z5L2-2"/>
</dbReference>
<dbReference type="ProteomicsDB" id="69318">
    <molecule id="Q7Z5L2-3"/>
</dbReference>
<dbReference type="Pumba" id="Q7Z5L2"/>
<dbReference type="Antibodypedia" id="52284">
    <property type="antibodies" value="96 antibodies from 24 providers"/>
</dbReference>
<dbReference type="DNASU" id="27291"/>
<dbReference type="Ensembl" id="ENST00000370586.6">
    <molecule id="Q7Z5L2-3"/>
    <property type="protein sequence ID" value="ENSP00000359618.1"/>
    <property type="gene ID" value="ENSG00000166024.14"/>
</dbReference>
<dbReference type="Ensembl" id="ENST00000612478.4">
    <molecule id="Q7Z5L2-1"/>
    <property type="protein sequence ID" value="ENSP00000483494.1"/>
    <property type="gene ID" value="ENSG00000166024.14"/>
</dbReference>
<dbReference type="Ensembl" id="ENST00000613938.4">
    <molecule id="Q7Z5L2-3"/>
    <property type="protein sequence ID" value="ENSP00000479916.1"/>
    <property type="gene ID" value="ENSG00000166024.14"/>
</dbReference>
<dbReference type="GeneID" id="27291"/>
<dbReference type="KEGG" id="hsa:27291"/>
<dbReference type="UCSC" id="uc009xvx.4">
    <molecule id="Q7Z5L2-1"/>
    <property type="organism name" value="human"/>
</dbReference>
<dbReference type="AGR" id="HGNC:23512"/>
<dbReference type="CTD" id="27291"/>
<dbReference type="DisGeNET" id="27291"/>
<dbReference type="GeneCards" id="R3HCC1L"/>
<dbReference type="HGNC" id="HGNC:23512">
    <property type="gene designation" value="R3HCC1L"/>
</dbReference>
<dbReference type="HPA" id="ENSG00000166024">
    <property type="expression patterns" value="Low tissue specificity"/>
</dbReference>
<dbReference type="neXtProt" id="NX_Q7Z5L2"/>
<dbReference type="OpenTargets" id="ENSG00000166024"/>
<dbReference type="VEuPathDB" id="HostDB:ENSG00000166024"/>
<dbReference type="eggNOG" id="KOG4483">
    <property type="taxonomic scope" value="Eukaryota"/>
</dbReference>
<dbReference type="GeneTree" id="ENSGT00530000063711"/>
<dbReference type="HOGENOM" id="CLU_025109_0_0_1"/>
<dbReference type="InParanoid" id="Q7Z5L2"/>
<dbReference type="OrthoDB" id="5418203at2759"/>
<dbReference type="PAN-GO" id="Q7Z5L2">
    <property type="GO annotations" value="0 GO annotations based on evolutionary models"/>
</dbReference>
<dbReference type="PhylomeDB" id="Q7Z5L2"/>
<dbReference type="TreeFam" id="TF324168"/>
<dbReference type="PathwayCommons" id="Q7Z5L2"/>
<dbReference type="SignaLink" id="Q7Z5L2"/>
<dbReference type="BioGRID-ORCS" id="27291">
    <property type="hits" value="10 hits in 1161 CRISPR screens"/>
</dbReference>
<dbReference type="ChiTaRS" id="R3HCC1L">
    <property type="organism name" value="human"/>
</dbReference>
<dbReference type="GenomeRNAi" id="27291"/>
<dbReference type="Pharos" id="Q7Z5L2">
    <property type="development level" value="Tbio"/>
</dbReference>
<dbReference type="PRO" id="PR:Q7Z5L2"/>
<dbReference type="Proteomes" id="UP000005640">
    <property type="component" value="Chromosome 10"/>
</dbReference>
<dbReference type="RNAct" id="Q7Z5L2">
    <property type="molecule type" value="protein"/>
</dbReference>
<dbReference type="Bgee" id="ENSG00000166024">
    <property type="expression patterns" value="Expressed in primordial germ cell in gonad and 116 other cell types or tissues"/>
</dbReference>
<dbReference type="ExpressionAtlas" id="Q7Z5L2">
    <property type="expression patterns" value="baseline and differential"/>
</dbReference>
<dbReference type="Gene3D" id="3.30.70.330">
    <property type="match status" value="1"/>
</dbReference>
<dbReference type="InterPro" id="IPR012677">
    <property type="entry name" value="Nucleotide-bd_a/b_plait_sf"/>
</dbReference>
<dbReference type="InterPro" id="IPR039884">
    <property type="entry name" value="R3HC1/R3HCL"/>
</dbReference>
<dbReference type="PANTHER" id="PTHR21678:SF7">
    <property type="entry name" value="COILED-COIL DOMAIN-CONTAINING PROTEIN R3HCC1L"/>
    <property type="match status" value="1"/>
</dbReference>
<dbReference type="PANTHER" id="PTHR21678">
    <property type="entry name" value="GROWTH INHIBITION AND DIFFERENTIATION RELATED PROTEIN 88"/>
    <property type="match status" value="1"/>
</dbReference>
<keyword id="KW-0025">Alternative splicing</keyword>
<keyword id="KW-0175">Coiled coil</keyword>
<keyword id="KW-0597">Phosphoprotein</keyword>
<keyword id="KW-1267">Proteomics identification</keyword>
<keyword id="KW-1185">Reference proteome</keyword>
<accession>Q7Z5L2</accession>
<accession>O60598</accession>
<accession>Q5W0B4</accession>
<accession>Q5W0B5</accession>
<accession>Q86VT9</accession>
<accession>Q8N9H0</accession>
<proteinExistence type="evidence at protein level"/>